<organism>
    <name type="scientific">Homo sapiens</name>
    <name type="common">Human</name>
    <dbReference type="NCBI Taxonomy" id="9606"/>
    <lineage>
        <taxon>Eukaryota</taxon>
        <taxon>Metazoa</taxon>
        <taxon>Chordata</taxon>
        <taxon>Craniata</taxon>
        <taxon>Vertebrata</taxon>
        <taxon>Euteleostomi</taxon>
        <taxon>Mammalia</taxon>
        <taxon>Eutheria</taxon>
        <taxon>Euarchontoglires</taxon>
        <taxon>Primates</taxon>
        <taxon>Haplorrhini</taxon>
        <taxon>Catarrhini</taxon>
        <taxon>Hominidae</taxon>
        <taxon>Homo</taxon>
    </lineage>
</organism>
<accession>Q9Y2R5</accession>
<accession>Q86X15</accession>
<gene>
    <name type="primary">MRPS17</name>
    <name type="synonym">RPMS17</name>
    <name type="ORF">HSPC011</name>
</gene>
<dbReference type="EMBL" id="AF077035">
    <property type="protein sequence ID" value="AAD27768.1"/>
    <property type="molecule type" value="mRNA"/>
</dbReference>
<dbReference type="EMBL" id="AB049950">
    <property type="protein sequence ID" value="BAB41003.1"/>
    <property type="molecule type" value="mRNA"/>
</dbReference>
<dbReference type="EMBL" id="BC047445">
    <property type="protein sequence ID" value="AAH47445.2"/>
    <property type="molecule type" value="mRNA"/>
</dbReference>
<dbReference type="EMBL" id="BC054031">
    <property type="protein sequence ID" value="AAH54031.1"/>
    <property type="molecule type" value="mRNA"/>
</dbReference>
<dbReference type="CCDS" id="CCDS5520.1"/>
<dbReference type="RefSeq" id="NP_057053.1">
    <property type="nucleotide sequence ID" value="NM_015969.3"/>
</dbReference>
<dbReference type="PDB" id="3J9M">
    <property type="method" value="EM"/>
    <property type="resolution" value="3.50 A"/>
    <property type="chains" value="AN=1-130"/>
</dbReference>
<dbReference type="PDB" id="6NU2">
    <property type="method" value="EM"/>
    <property type="resolution" value="3.90 A"/>
    <property type="chains" value="AN=5-111"/>
</dbReference>
<dbReference type="PDB" id="6NU3">
    <property type="method" value="EM"/>
    <property type="resolution" value="4.40 A"/>
    <property type="chains" value="AN=1-130"/>
</dbReference>
<dbReference type="PDB" id="6RW4">
    <property type="method" value="EM"/>
    <property type="resolution" value="2.97 A"/>
    <property type="chains" value="N=1-130"/>
</dbReference>
<dbReference type="PDB" id="6RW5">
    <property type="method" value="EM"/>
    <property type="resolution" value="3.14 A"/>
    <property type="chains" value="N=1-130"/>
</dbReference>
<dbReference type="PDB" id="6VLZ">
    <property type="method" value="EM"/>
    <property type="resolution" value="2.97 A"/>
    <property type="chains" value="AN=1-130"/>
</dbReference>
<dbReference type="PDB" id="6VMI">
    <property type="method" value="EM"/>
    <property type="resolution" value="2.96 A"/>
    <property type="chains" value="AN=1-130"/>
</dbReference>
<dbReference type="PDB" id="6ZM5">
    <property type="method" value="EM"/>
    <property type="resolution" value="2.89 A"/>
    <property type="chains" value="AN=1-130"/>
</dbReference>
<dbReference type="PDB" id="6ZM6">
    <property type="method" value="EM"/>
    <property type="resolution" value="2.59 A"/>
    <property type="chains" value="AN=1-130"/>
</dbReference>
<dbReference type="PDB" id="6ZS9">
    <property type="method" value="EM"/>
    <property type="resolution" value="4.00 A"/>
    <property type="chains" value="AN=1-130"/>
</dbReference>
<dbReference type="PDB" id="6ZSA">
    <property type="method" value="EM"/>
    <property type="resolution" value="4.00 A"/>
    <property type="chains" value="AN=1-130"/>
</dbReference>
<dbReference type="PDB" id="6ZSB">
    <property type="method" value="EM"/>
    <property type="resolution" value="4.50 A"/>
    <property type="chains" value="AN=1-130"/>
</dbReference>
<dbReference type="PDB" id="6ZSC">
    <property type="method" value="EM"/>
    <property type="resolution" value="3.50 A"/>
    <property type="chains" value="AN=1-130"/>
</dbReference>
<dbReference type="PDB" id="6ZSD">
    <property type="method" value="EM"/>
    <property type="resolution" value="3.70 A"/>
    <property type="chains" value="AN=1-130"/>
</dbReference>
<dbReference type="PDB" id="6ZSE">
    <property type="method" value="EM"/>
    <property type="resolution" value="5.00 A"/>
    <property type="chains" value="AN=1-130"/>
</dbReference>
<dbReference type="PDB" id="6ZSG">
    <property type="method" value="EM"/>
    <property type="resolution" value="4.00 A"/>
    <property type="chains" value="AN=1-130"/>
</dbReference>
<dbReference type="PDB" id="7A5F">
    <property type="method" value="EM"/>
    <property type="resolution" value="4.40 A"/>
    <property type="chains" value="N6=1-130"/>
</dbReference>
<dbReference type="PDB" id="7A5G">
    <property type="method" value="EM"/>
    <property type="resolution" value="4.33 A"/>
    <property type="chains" value="N6=1-130"/>
</dbReference>
<dbReference type="PDB" id="7A5I">
    <property type="method" value="EM"/>
    <property type="resolution" value="3.70 A"/>
    <property type="chains" value="N6=1-130"/>
</dbReference>
<dbReference type="PDB" id="7A5K">
    <property type="method" value="EM"/>
    <property type="resolution" value="3.70 A"/>
    <property type="chains" value="N6=1-130"/>
</dbReference>
<dbReference type="PDB" id="7L08">
    <property type="method" value="EM"/>
    <property type="resolution" value="3.49 A"/>
    <property type="chains" value="AN=1-130"/>
</dbReference>
<dbReference type="PDB" id="7OG4">
    <property type="method" value="EM"/>
    <property type="resolution" value="3.80 A"/>
    <property type="chains" value="AN=1-130"/>
</dbReference>
<dbReference type="PDB" id="7P2E">
    <property type="method" value="EM"/>
    <property type="resolution" value="2.40 A"/>
    <property type="chains" value="N=1-130"/>
</dbReference>
<dbReference type="PDB" id="7PNX">
    <property type="method" value="EM"/>
    <property type="resolution" value="2.76 A"/>
    <property type="chains" value="N=1-130"/>
</dbReference>
<dbReference type="PDB" id="7PNY">
    <property type="method" value="EM"/>
    <property type="resolution" value="3.06 A"/>
    <property type="chains" value="N=1-130"/>
</dbReference>
<dbReference type="PDB" id="7PNZ">
    <property type="method" value="EM"/>
    <property type="resolution" value="3.09 A"/>
    <property type="chains" value="N=1-130"/>
</dbReference>
<dbReference type="PDB" id="7PO0">
    <property type="method" value="EM"/>
    <property type="resolution" value="2.90 A"/>
    <property type="chains" value="N=1-130"/>
</dbReference>
<dbReference type="PDB" id="7PO1">
    <property type="method" value="EM"/>
    <property type="resolution" value="2.92 A"/>
    <property type="chains" value="N=1-130"/>
</dbReference>
<dbReference type="PDB" id="7PO2">
    <property type="method" value="EM"/>
    <property type="resolution" value="3.09 A"/>
    <property type="chains" value="N=1-130"/>
</dbReference>
<dbReference type="PDB" id="7PO3">
    <property type="method" value="EM"/>
    <property type="resolution" value="2.92 A"/>
    <property type="chains" value="N=1-130"/>
</dbReference>
<dbReference type="PDB" id="7QI4">
    <property type="method" value="EM"/>
    <property type="resolution" value="2.21 A"/>
    <property type="chains" value="AN=1-130"/>
</dbReference>
<dbReference type="PDB" id="7QI5">
    <property type="method" value="EM"/>
    <property type="resolution" value="2.63 A"/>
    <property type="chains" value="AN=1-130"/>
</dbReference>
<dbReference type="PDB" id="7QI6">
    <property type="method" value="EM"/>
    <property type="resolution" value="2.98 A"/>
    <property type="chains" value="AN=1-130"/>
</dbReference>
<dbReference type="PDB" id="8ANY">
    <property type="method" value="EM"/>
    <property type="resolution" value="2.85 A"/>
    <property type="chains" value="AN=1-130"/>
</dbReference>
<dbReference type="PDB" id="8CSP">
    <property type="method" value="EM"/>
    <property type="resolution" value="2.66 A"/>
    <property type="chains" value="N=1-130"/>
</dbReference>
<dbReference type="PDB" id="8CSQ">
    <property type="method" value="EM"/>
    <property type="resolution" value="2.54 A"/>
    <property type="chains" value="N=1-130"/>
</dbReference>
<dbReference type="PDB" id="8CSR">
    <property type="method" value="EM"/>
    <property type="resolution" value="2.54 A"/>
    <property type="chains" value="N=1-130"/>
</dbReference>
<dbReference type="PDB" id="8CSS">
    <property type="method" value="EM"/>
    <property type="resolution" value="2.36 A"/>
    <property type="chains" value="N=1-130"/>
</dbReference>
<dbReference type="PDB" id="8CST">
    <property type="method" value="EM"/>
    <property type="resolution" value="2.85 A"/>
    <property type="chains" value="N=1-130"/>
</dbReference>
<dbReference type="PDB" id="8CSU">
    <property type="method" value="EM"/>
    <property type="resolution" value="3.03 A"/>
    <property type="chains" value="N=1-130"/>
</dbReference>
<dbReference type="PDB" id="8K2A">
    <property type="method" value="EM"/>
    <property type="resolution" value="2.90 A"/>
    <property type="chains" value="SQ=1-130"/>
</dbReference>
<dbReference type="PDB" id="8OIR">
    <property type="method" value="EM"/>
    <property type="resolution" value="3.10 A"/>
    <property type="chains" value="AN=1-130"/>
</dbReference>
<dbReference type="PDB" id="8OIS">
    <property type="method" value="EM"/>
    <property type="resolution" value="3.00 A"/>
    <property type="chains" value="AN=1-130"/>
</dbReference>
<dbReference type="PDB" id="8QRK">
    <property type="method" value="EM"/>
    <property type="resolution" value="6.69 A"/>
    <property type="chains" value="N=1-130"/>
</dbReference>
<dbReference type="PDB" id="8QRL">
    <property type="method" value="EM"/>
    <property type="resolution" value="3.34 A"/>
    <property type="chains" value="N=1-130"/>
</dbReference>
<dbReference type="PDB" id="8QRM">
    <property type="method" value="EM"/>
    <property type="resolution" value="3.05 A"/>
    <property type="chains" value="N=1-130"/>
</dbReference>
<dbReference type="PDB" id="8QRN">
    <property type="method" value="EM"/>
    <property type="resolution" value="2.98 A"/>
    <property type="chains" value="N=1-130"/>
</dbReference>
<dbReference type="PDB" id="8RRI">
    <property type="method" value="EM"/>
    <property type="resolution" value="2.40 A"/>
    <property type="chains" value="AN=1-130"/>
</dbReference>
<dbReference type="PDB" id="8XT0">
    <property type="method" value="EM"/>
    <property type="resolution" value="3.20 A"/>
    <property type="chains" value="SQ=1-130"/>
</dbReference>
<dbReference type="PDB" id="8XT2">
    <property type="method" value="EM"/>
    <property type="resolution" value="3.30 A"/>
    <property type="chains" value="SQ=1-130"/>
</dbReference>
<dbReference type="PDBsum" id="3J9M"/>
<dbReference type="PDBsum" id="6NU2"/>
<dbReference type="PDBsum" id="6NU3"/>
<dbReference type="PDBsum" id="6RW4"/>
<dbReference type="PDBsum" id="6RW5"/>
<dbReference type="PDBsum" id="6VLZ"/>
<dbReference type="PDBsum" id="6VMI"/>
<dbReference type="PDBsum" id="6ZM5"/>
<dbReference type="PDBsum" id="6ZM6"/>
<dbReference type="PDBsum" id="6ZS9"/>
<dbReference type="PDBsum" id="6ZSA"/>
<dbReference type="PDBsum" id="6ZSB"/>
<dbReference type="PDBsum" id="6ZSC"/>
<dbReference type="PDBsum" id="6ZSD"/>
<dbReference type="PDBsum" id="6ZSE"/>
<dbReference type="PDBsum" id="6ZSG"/>
<dbReference type="PDBsum" id="7A5F"/>
<dbReference type="PDBsum" id="7A5G"/>
<dbReference type="PDBsum" id="7A5I"/>
<dbReference type="PDBsum" id="7A5K"/>
<dbReference type="PDBsum" id="7L08"/>
<dbReference type="PDBsum" id="7OG4"/>
<dbReference type="PDBsum" id="7P2E"/>
<dbReference type="PDBsum" id="7PNX"/>
<dbReference type="PDBsum" id="7PNY"/>
<dbReference type="PDBsum" id="7PNZ"/>
<dbReference type="PDBsum" id="7PO0"/>
<dbReference type="PDBsum" id="7PO1"/>
<dbReference type="PDBsum" id="7PO2"/>
<dbReference type="PDBsum" id="7PO3"/>
<dbReference type="PDBsum" id="7QI4"/>
<dbReference type="PDBsum" id="7QI5"/>
<dbReference type="PDBsum" id="7QI6"/>
<dbReference type="PDBsum" id="8ANY"/>
<dbReference type="PDBsum" id="8CSP"/>
<dbReference type="PDBsum" id="8CSQ"/>
<dbReference type="PDBsum" id="8CSR"/>
<dbReference type="PDBsum" id="8CSS"/>
<dbReference type="PDBsum" id="8CST"/>
<dbReference type="PDBsum" id="8CSU"/>
<dbReference type="PDBsum" id="8K2A"/>
<dbReference type="PDBsum" id="8OIR"/>
<dbReference type="PDBsum" id="8OIS"/>
<dbReference type="PDBsum" id="8QRK"/>
<dbReference type="PDBsum" id="8QRL"/>
<dbReference type="PDBsum" id="8QRM"/>
<dbReference type="PDBsum" id="8QRN"/>
<dbReference type="PDBsum" id="8RRI"/>
<dbReference type="PDBsum" id="8XT0"/>
<dbReference type="PDBsum" id="8XT2"/>
<dbReference type="EMDB" id="EMD-0514"/>
<dbReference type="EMDB" id="EMD-0515"/>
<dbReference type="EMDB" id="EMD-10021"/>
<dbReference type="EMDB" id="EMD-10022"/>
<dbReference type="EMDB" id="EMD-11278"/>
<dbReference type="EMDB" id="EMD-11279"/>
<dbReference type="EMDB" id="EMD-11390"/>
<dbReference type="EMDB" id="EMD-11391"/>
<dbReference type="EMDB" id="EMD-11392"/>
<dbReference type="EMDB" id="EMD-11393"/>
<dbReference type="EMDB" id="EMD-11394"/>
<dbReference type="EMDB" id="EMD-11395"/>
<dbReference type="EMDB" id="EMD-11397"/>
<dbReference type="EMDB" id="EMD-11641"/>
<dbReference type="EMDB" id="EMD-11642"/>
<dbReference type="EMDB" id="EMD-11644"/>
<dbReference type="EMDB" id="EMD-11646"/>
<dbReference type="EMDB" id="EMD-12877"/>
<dbReference type="EMDB" id="EMD-13170"/>
<dbReference type="EMDB" id="EMD-13555"/>
<dbReference type="EMDB" id="EMD-13556"/>
<dbReference type="EMDB" id="EMD-13557"/>
<dbReference type="EMDB" id="EMD-13558"/>
<dbReference type="EMDB" id="EMD-13559"/>
<dbReference type="EMDB" id="EMD-13560"/>
<dbReference type="EMDB" id="EMD-13561"/>
<dbReference type="EMDB" id="EMD-13980"/>
<dbReference type="EMDB" id="EMD-13981"/>
<dbReference type="EMDB" id="EMD-13982"/>
<dbReference type="EMDB" id="EMD-15544"/>
<dbReference type="EMDB" id="EMD-16897"/>
<dbReference type="EMDB" id="EMD-16898"/>
<dbReference type="EMDB" id="EMD-19460"/>
<dbReference type="EMDB" id="EMD-21233"/>
<dbReference type="EMDB" id="EMD-21242"/>
<dbReference type="EMDB" id="EMD-23096"/>
<dbReference type="EMDB" id="EMD-26966"/>
<dbReference type="EMDB" id="EMD-26967"/>
<dbReference type="EMDB" id="EMD-26968"/>
<dbReference type="EMDB" id="EMD-26969"/>
<dbReference type="EMDB" id="EMD-26970"/>
<dbReference type="EMDB" id="EMD-26971"/>
<dbReference type="EMDB" id="EMD-36836"/>
<dbReference type="EMDB" id="EMD-38632"/>
<dbReference type="EMDB" id="EMD-38634"/>
<dbReference type="SMR" id="Q9Y2R5"/>
<dbReference type="BioGRID" id="119506">
    <property type="interactions" value="243"/>
</dbReference>
<dbReference type="ComplexPortal" id="CPX-5225">
    <property type="entry name" value="28S mitochondrial small ribosomal subunit"/>
</dbReference>
<dbReference type="CORUM" id="Q9Y2R5"/>
<dbReference type="FunCoup" id="Q9Y2R5">
    <property type="interactions" value="1212"/>
</dbReference>
<dbReference type="IntAct" id="Q9Y2R5">
    <property type="interactions" value="136"/>
</dbReference>
<dbReference type="MINT" id="Q9Y2R5"/>
<dbReference type="STRING" id="9606.ENSP00000285298"/>
<dbReference type="iPTMnet" id="Q9Y2R5"/>
<dbReference type="PhosphoSitePlus" id="Q9Y2R5"/>
<dbReference type="SwissPalm" id="Q9Y2R5"/>
<dbReference type="BioMuta" id="MRPS17"/>
<dbReference type="DMDM" id="13633951"/>
<dbReference type="jPOST" id="Q9Y2R5"/>
<dbReference type="MassIVE" id="Q9Y2R5"/>
<dbReference type="PaxDb" id="9606-ENSP00000285298"/>
<dbReference type="PeptideAtlas" id="Q9Y2R5"/>
<dbReference type="ProteomicsDB" id="85880"/>
<dbReference type="Pumba" id="Q9Y2R5"/>
<dbReference type="TopDownProteomics" id="Q9Y2R5"/>
<dbReference type="Antibodypedia" id="66312">
    <property type="antibodies" value="59 antibodies from 20 providers"/>
</dbReference>
<dbReference type="DNASU" id="51373"/>
<dbReference type="Ensembl" id="ENST00000285298.9">
    <property type="protein sequence ID" value="ENSP00000285298.4"/>
    <property type="gene ID" value="ENSG00000239789.6"/>
</dbReference>
<dbReference type="GeneID" id="51373"/>
<dbReference type="KEGG" id="hsa:51373"/>
<dbReference type="MANE-Select" id="ENST00000285298.9">
    <property type="protein sequence ID" value="ENSP00000285298.4"/>
    <property type="RefSeq nucleotide sequence ID" value="NM_015969.3"/>
    <property type="RefSeq protein sequence ID" value="NP_057053.1"/>
</dbReference>
<dbReference type="UCSC" id="uc003trd.4">
    <property type="organism name" value="human"/>
</dbReference>
<dbReference type="AGR" id="HGNC:14047"/>
<dbReference type="CTD" id="51373"/>
<dbReference type="DisGeNET" id="51373"/>
<dbReference type="GeneCards" id="MRPS17"/>
<dbReference type="HGNC" id="HGNC:14047">
    <property type="gene designation" value="MRPS17"/>
</dbReference>
<dbReference type="HPA" id="ENSG00000239789">
    <property type="expression patterns" value="Low tissue specificity"/>
</dbReference>
<dbReference type="MIM" id="611980">
    <property type="type" value="gene"/>
</dbReference>
<dbReference type="neXtProt" id="NX_Q9Y2R5"/>
<dbReference type="OpenTargets" id="ENSG00000239789"/>
<dbReference type="PharmGKB" id="PA31002"/>
<dbReference type="VEuPathDB" id="HostDB:ENSG00000239789"/>
<dbReference type="eggNOG" id="KOG3447">
    <property type="taxonomic scope" value="Eukaryota"/>
</dbReference>
<dbReference type="GeneTree" id="ENSGT00530000064130"/>
<dbReference type="InParanoid" id="Q9Y2R5"/>
<dbReference type="OrthoDB" id="274752at2759"/>
<dbReference type="PAN-GO" id="Q9Y2R5">
    <property type="GO annotations" value="1 GO annotation based on evolutionary models"/>
</dbReference>
<dbReference type="PhylomeDB" id="Q9Y2R5"/>
<dbReference type="TreeFam" id="TF326484"/>
<dbReference type="PathwayCommons" id="Q9Y2R5"/>
<dbReference type="Reactome" id="R-HSA-5368286">
    <property type="pathway name" value="Mitochondrial translation initiation"/>
</dbReference>
<dbReference type="Reactome" id="R-HSA-5389840">
    <property type="pathway name" value="Mitochondrial translation elongation"/>
</dbReference>
<dbReference type="Reactome" id="R-HSA-5419276">
    <property type="pathway name" value="Mitochondrial translation termination"/>
</dbReference>
<dbReference type="SignaLink" id="Q9Y2R5"/>
<dbReference type="SIGNOR" id="Q9Y2R5"/>
<dbReference type="BioGRID-ORCS" id="51373">
    <property type="hits" value="132 hits in 1160 CRISPR screens"/>
</dbReference>
<dbReference type="ChiTaRS" id="MRPS17">
    <property type="organism name" value="human"/>
</dbReference>
<dbReference type="GeneWiki" id="MRPS17"/>
<dbReference type="GenomeRNAi" id="51373"/>
<dbReference type="Pharos" id="Q9Y2R5">
    <property type="development level" value="Tdark"/>
</dbReference>
<dbReference type="PRO" id="PR:Q9Y2R5"/>
<dbReference type="Proteomes" id="UP000005640">
    <property type="component" value="Chromosome 7"/>
</dbReference>
<dbReference type="RNAct" id="Q9Y2R5">
    <property type="molecule type" value="protein"/>
</dbReference>
<dbReference type="Bgee" id="ENSG00000239789">
    <property type="expression patterns" value="Expressed in gastrocnemius and 101 other cell types or tissues"/>
</dbReference>
<dbReference type="ExpressionAtlas" id="Q9Y2R5">
    <property type="expression patterns" value="baseline and differential"/>
</dbReference>
<dbReference type="GO" id="GO:0005743">
    <property type="term" value="C:mitochondrial inner membrane"/>
    <property type="evidence" value="ECO:0000304"/>
    <property type="project" value="Reactome"/>
</dbReference>
<dbReference type="GO" id="GO:0005763">
    <property type="term" value="C:mitochondrial small ribosomal subunit"/>
    <property type="evidence" value="ECO:0000314"/>
    <property type="project" value="UniProtKB"/>
</dbReference>
<dbReference type="GO" id="GO:0005739">
    <property type="term" value="C:mitochondrion"/>
    <property type="evidence" value="ECO:0006056"/>
    <property type="project" value="FlyBase"/>
</dbReference>
<dbReference type="GO" id="GO:0019843">
    <property type="term" value="F:rRNA binding"/>
    <property type="evidence" value="ECO:0007669"/>
    <property type="project" value="UniProtKB-KW"/>
</dbReference>
<dbReference type="GO" id="GO:0003735">
    <property type="term" value="F:structural constituent of ribosome"/>
    <property type="evidence" value="ECO:0007005"/>
    <property type="project" value="UniProtKB"/>
</dbReference>
<dbReference type="GO" id="GO:0032543">
    <property type="term" value="P:mitochondrial translation"/>
    <property type="evidence" value="ECO:0007005"/>
    <property type="project" value="UniProtKB"/>
</dbReference>
<dbReference type="GO" id="GO:0006412">
    <property type="term" value="P:translation"/>
    <property type="evidence" value="ECO:0000303"/>
    <property type="project" value="UniProtKB"/>
</dbReference>
<dbReference type="CDD" id="cd00364">
    <property type="entry name" value="Ribosomal_uS17"/>
    <property type="match status" value="1"/>
</dbReference>
<dbReference type="FunFam" id="2.40.50.140:FF:000137">
    <property type="entry name" value="28S ribosomal protein S17, mitochondrial"/>
    <property type="match status" value="1"/>
</dbReference>
<dbReference type="Gene3D" id="2.40.50.140">
    <property type="entry name" value="Nucleic acid-binding proteins"/>
    <property type="match status" value="1"/>
</dbReference>
<dbReference type="InterPro" id="IPR012340">
    <property type="entry name" value="NA-bd_OB-fold"/>
</dbReference>
<dbReference type="InterPro" id="IPR000266">
    <property type="entry name" value="Ribosomal_uS17"/>
</dbReference>
<dbReference type="InterPro" id="IPR039193">
    <property type="entry name" value="Ribosomal_uS17m_metazoa"/>
</dbReference>
<dbReference type="PANTHER" id="PTHR24088">
    <property type="entry name" value="28S RIBOSOMAL PROTEIN S17, MITOCHONDRIAL"/>
    <property type="match status" value="1"/>
</dbReference>
<dbReference type="PANTHER" id="PTHR24088:SF2">
    <property type="entry name" value="SMALL RIBOSOMAL SUBUNIT PROTEIN US17M"/>
    <property type="match status" value="1"/>
</dbReference>
<dbReference type="Pfam" id="PF00366">
    <property type="entry name" value="Ribosomal_S17"/>
    <property type="match status" value="1"/>
</dbReference>
<dbReference type="SUPFAM" id="SSF50249">
    <property type="entry name" value="Nucleic acid-binding proteins"/>
    <property type="match status" value="1"/>
</dbReference>
<protein>
    <recommendedName>
        <fullName evidence="3">Small ribosomal subunit protein uS17m</fullName>
    </recommendedName>
    <alternativeName>
        <fullName>28S ribosomal protein S17, mitochondrial</fullName>
        <shortName>MRP-S17</shortName>
        <shortName>S17mt</shortName>
    </alternativeName>
</protein>
<name>RT17_HUMAN</name>
<evidence type="ECO:0000255" key="1"/>
<evidence type="ECO:0000269" key="2">
    <source>
    </source>
</evidence>
<evidence type="ECO:0000303" key="3">
    <source>
    </source>
</evidence>
<evidence type="ECO:0000305" key="4"/>
<evidence type="ECO:0007744" key="5">
    <source>
        <dbReference type="PDB" id="3J9M"/>
    </source>
</evidence>
<evidence type="ECO:0007829" key="6">
    <source>
        <dbReference type="PDB" id="8CSS"/>
    </source>
</evidence>
<proteinExistence type="evidence at protein level"/>
<comment type="subunit">
    <text evidence="2">Component of the mitochondrial small ribosomal subunit (mt-SSU). Mature mammalian 55S mitochondrial ribosomes consist of a small (28S) and a large (39S) subunit. The 28S small subunit contains a 12S ribosomal RNA (12S mt-rRNA) and 30 different proteins. The 39S large subunit contains a 16S rRNA (16S mt-rRNA), a copy of mitochondrial valine transfer RNA (mt-tRNA(Val)), which plays an integral structural role, and 52 different proteins.</text>
</comment>
<comment type="interaction">
    <interactant intactId="EBI-1046443">
        <id>Q9Y2R5</id>
    </interactant>
    <interactant intactId="EBI-747754">
        <id>P28799</id>
        <label>GRN</label>
    </interactant>
    <organismsDiffer>false</organismsDiffer>
    <experiments>3</experiments>
</comment>
<comment type="interaction">
    <interactant intactId="EBI-1046443">
        <id>Q9Y2R5</id>
    </interactant>
    <interactant intactId="EBI-720609">
        <id>O76024</id>
        <label>WFS1</label>
    </interactant>
    <organismsDiffer>false</organismsDiffer>
    <experiments>3</experiments>
</comment>
<comment type="subcellular location">
    <subcellularLocation>
        <location evidence="2">Mitochondrion</location>
    </subcellularLocation>
</comment>
<comment type="similarity">
    <text evidence="4">Belongs to the universal ribosomal protein uS17 family.</text>
</comment>
<reference key="1">
    <citation type="journal article" date="1998" name="Proc. Natl. Acad. Sci. U.S.A.">
        <title>Identification of genes expressed in human CD34(+) hematopoietic stem/progenitor cells by expressed sequence tags and efficient full-length cDNA cloning.</title>
        <authorList>
            <person name="Mao M."/>
            <person name="Fu G."/>
            <person name="Wu J.-S."/>
            <person name="Zhang Q.-H."/>
            <person name="Zhou J."/>
            <person name="Kan L.-X."/>
            <person name="Huang Q.-H."/>
            <person name="He K.-L."/>
            <person name="Gu B.-W."/>
            <person name="Han Z.-G."/>
            <person name="Shen Y."/>
            <person name="Gu J."/>
            <person name="Yu Y.-P."/>
            <person name="Xu S.-H."/>
            <person name="Wang Y.-X."/>
            <person name="Chen S.-J."/>
            <person name="Chen Z."/>
        </authorList>
    </citation>
    <scope>NUCLEOTIDE SEQUENCE [LARGE SCALE MRNA]</scope>
    <source>
        <tissue>Umbilical cord blood</tissue>
    </source>
</reference>
<reference key="2">
    <citation type="journal article" date="2001" name="J. Biol. Chem.">
        <title>Proteomic analysis of the mammalian mitochondrial ribosome. Identification of protein components in the 28S small subunit.</title>
        <authorList>
            <person name="Suzuki T."/>
            <person name="Terasaki M."/>
            <person name="Takemoto-Hori C."/>
            <person name="Hanada T."/>
            <person name="Ueda T."/>
            <person name="Wada A."/>
            <person name="Watanabe K."/>
        </authorList>
    </citation>
    <scope>NUCLEOTIDE SEQUENCE [MRNA]</scope>
</reference>
<reference key="3">
    <citation type="journal article" date="2004" name="Genome Res.">
        <title>The status, quality, and expansion of the NIH full-length cDNA project: the Mammalian Gene Collection (MGC).</title>
        <authorList>
            <consortium name="The MGC Project Team"/>
        </authorList>
    </citation>
    <scope>NUCLEOTIDE SEQUENCE [LARGE SCALE MRNA]</scope>
    <source>
        <tissue>Brain</tissue>
        <tissue>Uterus</tissue>
    </source>
</reference>
<reference key="4">
    <citation type="journal article" date="2001" name="J. Biol. Chem.">
        <title>The small subunit of the mammalian mitochondrial ribosome: identification of the full complement of ribosomal proteins present.</title>
        <authorList>
            <person name="Koc E.C."/>
            <person name="Burkhart W."/>
            <person name="Blackburn K."/>
            <person name="Moseley A."/>
            <person name="Spremulli L.L."/>
        </authorList>
    </citation>
    <scope>IDENTIFICATION</scope>
</reference>
<reference evidence="5" key="5">
    <citation type="journal article" date="2015" name="Science">
        <title>Ribosome. The structure of the human mitochondrial ribosome.</title>
        <authorList>
            <person name="Amunts A."/>
            <person name="Brown A."/>
            <person name="Toots J."/>
            <person name="Scheres S.H."/>
            <person name="Ramakrishnan V."/>
        </authorList>
    </citation>
    <scope>STRUCTURE BY ELECTRON MICROSCOPY (3.50 ANGSTROMS)</scope>
    <scope>SUBCELLULAR LOCATION</scope>
    <scope>SUBUNIT</scope>
</reference>
<keyword id="KW-0002">3D-structure</keyword>
<keyword id="KW-0496">Mitochondrion</keyword>
<keyword id="KW-1267">Proteomics identification</keyword>
<keyword id="KW-1185">Reference proteome</keyword>
<keyword id="KW-0687">Ribonucleoprotein</keyword>
<keyword id="KW-0689">Ribosomal protein</keyword>
<keyword id="KW-0694">RNA-binding</keyword>
<keyword id="KW-0699">rRNA-binding</keyword>
<keyword id="KW-0809">Transit peptide</keyword>
<sequence length="130" mass="14502">MSVVRSSVHARWIVGKVIGTKMQKTAKVRVTRLVLDPYLLKYFNKRKTYFAHDALQQCTVGDIVLLRALPVPRAKHVKHELAEIVFKVGKVIDPVTGKPCAGTTYLESPLSSETTQLSKNLEELNISSAQ</sequence>
<feature type="transit peptide" description="Mitochondrion" evidence="1">
    <location>
        <begin position="1"/>
        <end position="20"/>
    </location>
</feature>
<feature type="chain" id="PRO_0000030623" description="Small ribosomal subunit protein uS17m">
    <location>
        <begin position="21"/>
        <end position="130"/>
    </location>
</feature>
<feature type="strand" evidence="6">
    <location>
        <begin position="12"/>
        <end position="22"/>
    </location>
</feature>
<feature type="strand" evidence="6">
    <location>
        <begin position="25"/>
        <end position="35"/>
    </location>
</feature>
<feature type="turn" evidence="6">
    <location>
        <begin position="37"/>
        <end position="39"/>
    </location>
</feature>
<feature type="strand" evidence="6">
    <location>
        <begin position="42"/>
        <end position="52"/>
    </location>
</feature>
<feature type="strand" evidence="6">
    <location>
        <begin position="63"/>
        <end position="68"/>
    </location>
</feature>
<feature type="strand" evidence="6">
    <location>
        <begin position="73"/>
        <end position="86"/>
    </location>
</feature>
<feature type="turn" evidence="6">
    <location>
        <begin position="94"/>
        <end position="96"/>
    </location>
</feature>
<feature type="strand" evidence="6">
    <location>
        <begin position="99"/>
        <end position="101"/>
    </location>
</feature>
<feature type="strand" evidence="6">
    <location>
        <begin position="104"/>
        <end position="107"/>
    </location>
</feature>
<feature type="helix" evidence="6">
    <location>
        <begin position="109"/>
        <end position="111"/>
    </location>
</feature>